<evidence type="ECO:0000250" key="1"/>
<evidence type="ECO:0000269" key="2">
    <source>
    </source>
</evidence>
<evidence type="ECO:0000305" key="3"/>
<name>WECB_METMP</name>
<feature type="chain" id="PRO_0000337833" description="UDP-N-acetylglucosamine 2-epimerase">
    <location>
        <begin position="1"/>
        <end position="366"/>
    </location>
</feature>
<feature type="active site" evidence="1">
    <location>
        <position position="206"/>
    </location>
</feature>
<dbReference type="EC" id="5.1.3.14"/>
<dbReference type="EMBL" id="BX950229">
    <property type="protein sequence ID" value="CAF30261.1"/>
    <property type="molecule type" value="Genomic_DNA"/>
</dbReference>
<dbReference type="RefSeq" id="WP_011170649.1">
    <property type="nucleotide sequence ID" value="NC_005791.1"/>
</dbReference>
<dbReference type="SMR" id="Q6LZC4"/>
<dbReference type="STRING" id="267377.MMP0705"/>
<dbReference type="EnsemblBacteria" id="CAF30261">
    <property type="protein sequence ID" value="CAF30261"/>
    <property type="gene ID" value="MMP0705"/>
</dbReference>
<dbReference type="GeneID" id="2761897"/>
<dbReference type="KEGG" id="mmp:MMP0705"/>
<dbReference type="PATRIC" id="fig|267377.15.peg.722"/>
<dbReference type="eggNOG" id="arCOG01392">
    <property type="taxonomic scope" value="Archaea"/>
</dbReference>
<dbReference type="HOGENOM" id="CLU_041674_0_1_2"/>
<dbReference type="OrthoDB" id="7018at2157"/>
<dbReference type="BRENDA" id="5.1.3.14">
    <property type="organism ID" value="3262"/>
</dbReference>
<dbReference type="SABIO-RK" id="Q6LZC4"/>
<dbReference type="Proteomes" id="UP000000590">
    <property type="component" value="Chromosome"/>
</dbReference>
<dbReference type="GO" id="GO:0005737">
    <property type="term" value="C:cytoplasm"/>
    <property type="evidence" value="ECO:0007669"/>
    <property type="project" value="UniProtKB-SubCell"/>
</dbReference>
<dbReference type="GO" id="GO:0008761">
    <property type="term" value="F:UDP-N-acetylglucosamine 2-epimerase activity"/>
    <property type="evidence" value="ECO:0000314"/>
    <property type="project" value="CACAO"/>
</dbReference>
<dbReference type="CDD" id="cd03786">
    <property type="entry name" value="GTB_UDP-GlcNAc_2-Epimerase"/>
    <property type="match status" value="1"/>
</dbReference>
<dbReference type="Gene3D" id="3.40.50.2000">
    <property type="entry name" value="Glycogen Phosphorylase B"/>
    <property type="match status" value="2"/>
</dbReference>
<dbReference type="InterPro" id="IPR003331">
    <property type="entry name" value="UDP_GlcNAc_Epimerase_2_dom"/>
</dbReference>
<dbReference type="InterPro" id="IPR029767">
    <property type="entry name" value="WecB-like"/>
</dbReference>
<dbReference type="NCBIfam" id="TIGR00236">
    <property type="entry name" value="wecB"/>
    <property type="match status" value="1"/>
</dbReference>
<dbReference type="PANTHER" id="PTHR43174">
    <property type="entry name" value="UDP-N-ACETYLGLUCOSAMINE 2-EPIMERASE"/>
    <property type="match status" value="1"/>
</dbReference>
<dbReference type="PANTHER" id="PTHR43174:SF1">
    <property type="entry name" value="UDP-N-ACETYLGLUCOSAMINE 2-EPIMERASE"/>
    <property type="match status" value="1"/>
</dbReference>
<dbReference type="Pfam" id="PF02350">
    <property type="entry name" value="Epimerase_2"/>
    <property type="match status" value="1"/>
</dbReference>
<dbReference type="SUPFAM" id="SSF53756">
    <property type="entry name" value="UDP-Glycosyltransferase/glycogen phosphorylase"/>
    <property type="match status" value="1"/>
</dbReference>
<protein>
    <recommendedName>
        <fullName>UDP-N-acetylglucosamine 2-epimerase</fullName>
        <ecNumber>5.1.3.14</ecNumber>
    </recommendedName>
    <alternativeName>
        <fullName>UDP-GlcNAc-2-epimerase</fullName>
    </alternativeName>
</protein>
<reference key="1">
    <citation type="journal article" date="2004" name="J. Bacteriol.">
        <title>Complete genome sequence of the genetically tractable hydrogenotrophic methanogen Methanococcus maripaludis.</title>
        <authorList>
            <person name="Hendrickson E.L."/>
            <person name="Kaul R."/>
            <person name="Zhou Y."/>
            <person name="Bovee D."/>
            <person name="Chapman P."/>
            <person name="Chung J."/>
            <person name="Conway de Macario E."/>
            <person name="Dodsworth J.A."/>
            <person name="Gillett W."/>
            <person name="Graham D.E."/>
            <person name="Hackett M."/>
            <person name="Haydock A.K."/>
            <person name="Kang A."/>
            <person name="Land M.L."/>
            <person name="Levy R."/>
            <person name="Lie T.J."/>
            <person name="Major T.A."/>
            <person name="Moore B.C."/>
            <person name="Porat I."/>
            <person name="Palmeiri A."/>
            <person name="Rouse G."/>
            <person name="Saenphimmachak C."/>
            <person name="Soell D."/>
            <person name="Van Dien S."/>
            <person name="Wang T."/>
            <person name="Whitman W.B."/>
            <person name="Xia Q."/>
            <person name="Zhang Y."/>
            <person name="Larimer F.W."/>
            <person name="Olson M.V."/>
            <person name="Leigh J.A."/>
        </authorList>
    </citation>
    <scope>NUCLEOTIDE SEQUENCE [LARGE SCALE GENOMIC DNA]</scope>
    <source>
        <strain>DSM 14266 / JCM 13030 / NBRC 101832 / S2 / LL</strain>
    </source>
</reference>
<reference key="2">
    <citation type="journal article" date="2008" name="J. Bacteriol.">
        <title>Acetamido sugar biosynthesis in the Euryarchaea.</title>
        <authorList>
            <person name="Namboori S.C."/>
            <person name="Graham D.E."/>
        </authorList>
    </citation>
    <scope>FUNCTION</scope>
    <scope>CATALYTIC ACTIVITY</scope>
    <scope>SUBUNIT</scope>
    <scope>BIOPHYSICOCHEMICAL PROPERTIES</scope>
    <source>
        <strain>900</strain>
    </source>
</reference>
<sequence length="366" mass="41356">MYKIGIILGTRPEIIKMSPVIRELTTKKFFLIHTNQHYSENMDKIFFEELNLKKPDYNLNIGSGSHGDQTGRMLMEIEKVLLKEKPDFVLVQGDTNTVLAGALAASKLGIKIGHIEAGLRSFDRKMPEETNRVLTDHISEFLFAPTKTAANNILKEGISDEKIHIVGNTIVDATIQNLKIAEKNEKVCKFISKITKNEKYFLLTLHRAENTDNFEILSKLVTSINNISKKYEKNIIFPIHPRTHKKLNEFGLINKLENNHLIKIIEPVGYLEFLGLEKNAELIITDSGGLQEEACILNVPCVTLRENTERPETLDVNSNILAGSDPENILNCVEKMLKSNRHWNNPFGDGNSGKIIVNIVFGEKKP</sequence>
<accession>Q6LZC4</accession>
<proteinExistence type="evidence at protein level"/>
<organism>
    <name type="scientific">Methanococcus maripaludis (strain DSM 14266 / JCM 13030 / NBRC 101832 / S2 / LL)</name>
    <dbReference type="NCBI Taxonomy" id="267377"/>
    <lineage>
        <taxon>Archaea</taxon>
        <taxon>Methanobacteriati</taxon>
        <taxon>Methanobacteriota</taxon>
        <taxon>Methanomada group</taxon>
        <taxon>Methanococci</taxon>
        <taxon>Methanococcales</taxon>
        <taxon>Methanococcaceae</taxon>
        <taxon>Methanococcus</taxon>
    </lineage>
</organism>
<gene>
    <name type="primary">wecB</name>
    <name type="synonym">wbpI</name>
    <name type="ordered locus">MMP0705</name>
</gene>
<comment type="function">
    <text evidence="2">Catalyzes the reversible epimerization at C-2 of UDP-N-acetylglucosamine (UDP-GlcNAc) to produce UDP-N-acetylmannosamine (UDP-ManNAc), the activated donor of ManNAc residues.</text>
</comment>
<comment type="catalytic activity">
    <reaction evidence="2">
        <text>UDP-N-acetyl-alpha-D-glucosamine = UDP-N-acetyl-alpha-D-mannosamine</text>
        <dbReference type="Rhea" id="RHEA:17213"/>
        <dbReference type="ChEBI" id="CHEBI:57705"/>
        <dbReference type="ChEBI" id="CHEBI:68623"/>
        <dbReference type="EC" id="5.1.3.14"/>
    </reaction>
</comment>
<comment type="biophysicochemical properties">
    <kinetics>
        <KM evidence="2">0.36 mM for UDP-GlcNAc</KM>
    </kinetics>
    <phDependence>
        <text evidence="2">Active from pH 6 to 10.</text>
    </phDependence>
    <temperatureDependence>
        <text evidence="2">Optimum temperature is 50 degrees Celsius.</text>
    </temperatureDependence>
</comment>
<comment type="subunit">
    <text evidence="2">Homodimer.</text>
</comment>
<comment type="subcellular location">
    <subcellularLocation>
        <location evidence="1">Cytoplasm</location>
    </subcellularLocation>
</comment>
<comment type="similarity">
    <text evidence="3">Belongs to the UDP-N-acetylglucosamine 2-epimerase family.</text>
</comment>
<keyword id="KW-0963">Cytoplasm</keyword>
<keyword id="KW-0413">Isomerase</keyword>
<keyword id="KW-1185">Reference proteome</keyword>